<dbReference type="EC" id="4.1.1.39" evidence="1"/>
<dbReference type="EMBL" id="CT978603">
    <property type="protein sequence ID" value="CAK27722.1"/>
    <property type="molecule type" value="Genomic_DNA"/>
</dbReference>
<dbReference type="SMR" id="A5GS63"/>
<dbReference type="STRING" id="316278.SynRCC307_0819"/>
<dbReference type="KEGG" id="syr:SynRCC307_0819"/>
<dbReference type="eggNOG" id="COG1850">
    <property type="taxonomic scope" value="Bacteria"/>
</dbReference>
<dbReference type="HOGENOM" id="CLU_031450_2_0_3"/>
<dbReference type="OrthoDB" id="9770811at2"/>
<dbReference type="Proteomes" id="UP000001115">
    <property type="component" value="Chromosome"/>
</dbReference>
<dbReference type="GO" id="GO:0031470">
    <property type="term" value="C:carboxysome"/>
    <property type="evidence" value="ECO:0007669"/>
    <property type="project" value="UniProtKB-SubCell"/>
</dbReference>
<dbReference type="GO" id="GO:0000287">
    <property type="term" value="F:magnesium ion binding"/>
    <property type="evidence" value="ECO:0007669"/>
    <property type="project" value="UniProtKB-UniRule"/>
</dbReference>
<dbReference type="GO" id="GO:0004497">
    <property type="term" value="F:monooxygenase activity"/>
    <property type="evidence" value="ECO:0007669"/>
    <property type="project" value="UniProtKB-KW"/>
</dbReference>
<dbReference type="GO" id="GO:0016984">
    <property type="term" value="F:ribulose-bisphosphate carboxylase activity"/>
    <property type="evidence" value="ECO:0007669"/>
    <property type="project" value="UniProtKB-UniRule"/>
</dbReference>
<dbReference type="GO" id="GO:0009853">
    <property type="term" value="P:photorespiration"/>
    <property type="evidence" value="ECO:0007669"/>
    <property type="project" value="UniProtKB-KW"/>
</dbReference>
<dbReference type="GO" id="GO:0019253">
    <property type="term" value="P:reductive pentose-phosphate cycle"/>
    <property type="evidence" value="ECO:0007669"/>
    <property type="project" value="UniProtKB-UniRule"/>
</dbReference>
<dbReference type="Gene3D" id="3.20.20.110">
    <property type="entry name" value="Ribulose bisphosphate carboxylase, large subunit, C-terminal domain"/>
    <property type="match status" value="1"/>
</dbReference>
<dbReference type="Gene3D" id="3.30.70.150">
    <property type="entry name" value="RuBisCO large subunit, N-terminal domain"/>
    <property type="match status" value="1"/>
</dbReference>
<dbReference type="HAMAP" id="MF_01338">
    <property type="entry name" value="RuBisCO_L_type1"/>
    <property type="match status" value="1"/>
</dbReference>
<dbReference type="InterPro" id="IPR033966">
    <property type="entry name" value="RuBisCO"/>
</dbReference>
<dbReference type="InterPro" id="IPR020878">
    <property type="entry name" value="RuBisCo_large_chain_AS"/>
</dbReference>
<dbReference type="InterPro" id="IPR000685">
    <property type="entry name" value="RuBisCO_lsu_C"/>
</dbReference>
<dbReference type="InterPro" id="IPR036376">
    <property type="entry name" value="RuBisCO_lsu_C_sf"/>
</dbReference>
<dbReference type="InterPro" id="IPR017443">
    <property type="entry name" value="RuBisCO_lsu_fd_N"/>
</dbReference>
<dbReference type="InterPro" id="IPR036422">
    <property type="entry name" value="RuBisCO_lsu_N_sf"/>
</dbReference>
<dbReference type="InterPro" id="IPR020888">
    <property type="entry name" value="RuBisCO_lsuI"/>
</dbReference>
<dbReference type="NCBIfam" id="NF003252">
    <property type="entry name" value="PRK04208.1"/>
    <property type="match status" value="1"/>
</dbReference>
<dbReference type="PANTHER" id="PTHR42704">
    <property type="entry name" value="RIBULOSE BISPHOSPHATE CARBOXYLASE"/>
    <property type="match status" value="1"/>
</dbReference>
<dbReference type="PANTHER" id="PTHR42704:SF17">
    <property type="entry name" value="RIBULOSE BISPHOSPHATE CARBOXYLASE LARGE CHAIN"/>
    <property type="match status" value="1"/>
</dbReference>
<dbReference type="Pfam" id="PF00016">
    <property type="entry name" value="RuBisCO_large"/>
    <property type="match status" value="1"/>
</dbReference>
<dbReference type="Pfam" id="PF02788">
    <property type="entry name" value="RuBisCO_large_N"/>
    <property type="match status" value="1"/>
</dbReference>
<dbReference type="SFLD" id="SFLDG01052">
    <property type="entry name" value="RuBisCO"/>
    <property type="match status" value="1"/>
</dbReference>
<dbReference type="SFLD" id="SFLDS00014">
    <property type="entry name" value="RuBisCO"/>
    <property type="match status" value="1"/>
</dbReference>
<dbReference type="SFLD" id="SFLDG00301">
    <property type="entry name" value="RuBisCO-like_proteins"/>
    <property type="match status" value="1"/>
</dbReference>
<dbReference type="SUPFAM" id="SSF51649">
    <property type="entry name" value="RuBisCo, C-terminal domain"/>
    <property type="match status" value="1"/>
</dbReference>
<dbReference type="SUPFAM" id="SSF54966">
    <property type="entry name" value="RuBisCO, large subunit, small (N-terminal) domain"/>
    <property type="match status" value="1"/>
</dbReference>
<dbReference type="PROSITE" id="PS00157">
    <property type="entry name" value="RUBISCO_LARGE"/>
    <property type="match status" value="1"/>
</dbReference>
<gene>
    <name evidence="1" type="primary">cbbL</name>
    <name evidence="1" type="synonym">rbcL</name>
    <name type="ordered locus">SynRCC307_0819</name>
</gene>
<evidence type="ECO:0000255" key="1">
    <source>
        <dbReference type="HAMAP-Rule" id="MF_01338"/>
    </source>
</evidence>
<reference key="1">
    <citation type="submission" date="2006-05" db="EMBL/GenBank/DDBJ databases">
        <authorList>
            <consortium name="Genoscope"/>
        </authorList>
    </citation>
    <scope>NUCLEOTIDE SEQUENCE [LARGE SCALE GENOMIC DNA]</scope>
    <source>
        <strain>RCC307</strain>
    </source>
</reference>
<proteinExistence type="inferred from homology"/>
<protein>
    <recommendedName>
        <fullName evidence="1">Ribulose bisphosphate carboxylase large chain</fullName>
        <shortName evidence="1">RuBisCO large subunit</shortName>
        <ecNumber evidence="1">4.1.1.39</ecNumber>
    </recommendedName>
</protein>
<sequence>MSKKYDAGVKEYRDTYWTPDYVPLDTDLLACFKCTGQEGVPKEEVAAAVAAESSTGTWSTVWSELLTDLDFYKGRCYRIEDVPGDKESFYAFIAYPLDLFEEGSITNVLTSLVGNVFGFKALRHLRLEDIRFPLAFIKTCYGPPNGIVVERDRMNKYGRPLLGCTIKPKLGLSGKNYGRVVYECLRGGLDFTKDDENINSQPFQRWQNRFEFVAEAIRLAEQETGEKKGHYLNVTANTPEEMYERAEFAKELGMPIVMHDFITGGFTANTGLSKWCRKNGMLLHIHRAMHAVIDRHPKHGIHFRVLAKCLRLSGGDQLHTGTVVGKLEGDRQTTLGYIDQLRESFVPEDRSRGNFFDQDWGSMPGVFAVASGGIHVWHMPALVTIFGDDSVLQFGGGTHGHPWGSAAGAAANRVALEACVKARNAGRHLEKESRDILMEAAKHSPELAIALETWKEIKFEFDTVDKLDVQS</sequence>
<feature type="chain" id="PRO_1000067648" description="Ribulose bisphosphate carboxylase large chain">
    <location>
        <begin position="1"/>
        <end position="471"/>
    </location>
</feature>
<feature type="active site" description="Proton acceptor" evidence="1">
    <location>
        <position position="167"/>
    </location>
</feature>
<feature type="active site" description="Proton acceptor" evidence="1">
    <location>
        <position position="286"/>
    </location>
</feature>
<feature type="binding site" description="in homodimeric partner" evidence="1">
    <location>
        <position position="115"/>
    </location>
    <ligand>
        <name>substrate</name>
    </ligand>
</feature>
<feature type="binding site" evidence="1">
    <location>
        <position position="165"/>
    </location>
    <ligand>
        <name>substrate</name>
    </ligand>
</feature>
<feature type="binding site" evidence="1">
    <location>
        <position position="169"/>
    </location>
    <ligand>
        <name>substrate</name>
    </ligand>
</feature>
<feature type="binding site" description="via carbamate group" evidence="1">
    <location>
        <position position="193"/>
    </location>
    <ligand>
        <name>Mg(2+)</name>
        <dbReference type="ChEBI" id="CHEBI:18420"/>
    </ligand>
</feature>
<feature type="binding site" evidence="1">
    <location>
        <position position="195"/>
    </location>
    <ligand>
        <name>Mg(2+)</name>
        <dbReference type="ChEBI" id="CHEBI:18420"/>
    </ligand>
</feature>
<feature type="binding site" evidence="1">
    <location>
        <position position="196"/>
    </location>
    <ligand>
        <name>Mg(2+)</name>
        <dbReference type="ChEBI" id="CHEBI:18420"/>
    </ligand>
</feature>
<feature type="binding site" evidence="1">
    <location>
        <position position="287"/>
    </location>
    <ligand>
        <name>substrate</name>
    </ligand>
</feature>
<feature type="binding site" evidence="1">
    <location>
        <position position="319"/>
    </location>
    <ligand>
        <name>substrate</name>
    </ligand>
</feature>
<feature type="binding site" evidence="1">
    <location>
        <position position="371"/>
    </location>
    <ligand>
        <name>substrate</name>
    </ligand>
</feature>
<feature type="site" description="Transition state stabilizer" evidence="1">
    <location>
        <position position="326"/>
    </location>
</feature>
<feature type="modified residue" description="N6-carboxylysine" evidence="1">
    <location>
        <position position="193"/>
    </location>
</feature>
<comment type="function">
    <text evidence="1">RuBisCO catalyzes two reactions: the carboxylation of D-ribulose 1,5-bisphosphate, the primary event in carbon dioxide fixation, as well as the oxidative fragmentation of the pentose substrate in the photorespiration process. Both reactions occur simultaneously and in competition at the same active site.</text>
</comment>
<comment type="catalytic activity">
    <reaction evidence="1">
        <text>2 (2R)-3-phosphoglycerate + 2 H(+) = D-ribulose 1,5-bisphosphate + CO2 + H2O</text>
        <dbReference type="Rhea" id="RHEA:23124"/>
        <dbReference type="ChEBI" id="CHEBI:15377"/>
        <dbReference type="ChEBI" id="CHEBI:15378"/>
        <dbReference type="ChEBI" id="CHEBI:16526"/>
        <dbReference type="ChEBI" id="CHEBI:57870"/>
        <dbReference type="ChEBI" id="CHEBI:58272"/>
        <dbReference type="EC" id="4.1.1.39"/>
    </reaction>
</comment>
<comment type="catalytic activity">
    <reaction evidence="1">
        <text>D-ribulose 1,5-bisphosphate + O2 = 2-phosphoglycolate + (2R)-3-phosphoglycerate + 2 H(+)</text>
        <dbReference type="Rhea" id="RHEA:36631"/>
        <dbReference type="ChEBI" id="CHEBI:15378"/>
        <dbReference type="ChEBI" id="CHEBI:15379"/>
        <dbReference type="ChEBI" id="CHEBI:57870"/>
        <dbReference type="ChEBI" id="CHEBI:58033"/>
        <dbReference type="ChEBI" id="CHEBI:58272"/>
    </reaction>
</comment>
<comment type="cofactor">
    <cofactor evidence="1">
        <name>Mg(2+)</name>
        <dbReference type="ChEBI" id="CHEBI:18420"/>
    </cofactor>
    <text evidence="1">Binds 1 Mg(2+) ion per subunit.</text>
</comment>
<comment type="subunit">
    <text evidence="1">Heterohexadecamer of 8 large chains and 8 small chains.</text>
</comment>
<comment type="subcellular location">
    <subcellularLocation>
        <location evidence="1">Carboxysome</location>
    </subcellularLocation>
</comment>
<comment type="miscellaneous">
    <text evidence="1">The basic functional RuBisCO is composed of a large chain homodimer in a 'head-to-tail' conformation. In form I RuBisCO this homodimer is arranged in a barrel-like tetramer with the small subunits forming a tetrameric 'cap' on each end of the 'barrel'.</text>
</comment>
<comment type="similarity">
    <text evidence="1">Belongs to the RuBisCO large chain family. Type I subfamily.</text>
</comment>
<keyword id="KW-1283">Bacterial microcompartment</keyword>
<keyword id="KW-0113">Calvin cycle</keyword>
<keyword id="KW-0120">Carbon dioxide fixation</keyword>
<keyword id="KW-1282">Carboxysome</keyword>
<keyword id="KW-0456">Lyase</keyword>
<keyword id="KW-0460">Magnesium</keyword>
<keyword id="KW-0479">Metal-binding</keyword>
<keyword id="KW-0503">Monooxygenase</keyword>
<keyword id="KW-0560">Oxidoreductase</keyword>
<keyword id="KW-0601">Photorespiration</keyword>
<keyword id="KW-0602">Photosynthesis</keyword>
<keyword id="KW-1185">Reference proteome</keyword>
<organism>
    <name type="scientific">Synechococcus sp. (strain RCC307)</name>
    <dbReference type="NCBI Taxonomy" id="316278"/>
    <lineage>
        <taxon>Bacteria</taxon>
        <taxon>Bacillati</taxon>
        <taxon>Cyanobacteriota</taxon>
        <taxon>Cyanophyceae</taxon>
        <taxon>Synechococcales</taxon>
        <taxon>Synechococcaceae</taxon>
        <taxon>Synechococcus</taxon>
    </lineage>
</organism>
<accession>A5GS63</accession>
<name>RBL_SYNR3</name>